<gene>
    <name evidence="1" type="primary">MT-ND2</name>
    <name type="synonym">MTND2</name>
    <name type="synonym">NADH2</name>
    <name type="synonym">ND2</name>
</gene>
<reference key="1">
    <citation type="journal article" date="2005" name="Syst. Biol.">
        <title>Molecular phylogeny of the Carnivora (Mammalia): assessing the impact of increased sampling on resolving enigmatic relationships.</title>
        <authorList>
            <person name="Flynn J.J."/>
            <person name="Finarelli J.A."/>
            <person name="Zehr S."/>
            <person name="Hsu J."/>
            <person name="Nedbal M.A."/>
        </authorList>
    </citation>
    <scope>NUCLEOTIDE SEQUENCE [GENOMIC DNA]</scope>
</reference>
<keyword id="KW-0249">Electron transport</keyword>
<keyword id="KW-0472">Membrane</keyword>
<keyword id="KW-0496">Mitochondrion</keyword>
<keyword id="KW-0999">Mitochondrion inner membrane</keyword>
<keyword id="KW-0520">NAD</keyword>
<keyword id="KW-1185">Reference proteome</keyword>
<keyword id="KW-0679">Respiratory chain</keyword>
<keyword id="KW-1278">Translocase</keyword>
<keyword id="KW-0812">Transmembrane</keyword>
<keyword id="KW-1133">Transmembrane helix</keyword>
<keyword id="KW-0813">Transport</keyword>
<keyword id="KW-0830">Ubiquinone</keyword>
<geneLocation type="mitochondrion"/>
<organism>
    <name type="scientific">Vulpes vulpes</name>
    <name type="common">Red fox</name>
    <dbReference type="NCBI Taxonomy" id="9627"/>
    <lineage>
        <taxon>Eukaryota</taxon>
        <taxon>Metazoa</taxon>
        <taxon>Chordata</taxon>
        <taxon>Craniata</taxon>
        <taxon>Vertebrata</taxon>
        <taxon>Euteleostomi</taxon>
        <taxon>Mammalia</taxon>
        <taxon>Eutheria</taxon>
        <taxon>Laurasiatheria</taxon>
        <taxon>Carnivora</taxon>
        <taxon>Caniformia</taxon>
        <taxon>Canidae</taxon>
        <taxon>Vulpes</taxon>
    </lineage>
</organism>
<evidence type="ECO:0000250" key="1">
    <source>
        <dbReference type="UniProtKB" id="P03891"/>
    </source>
</evidence>
<evidence type="ECO:0000250" key="2">
    <source>
        <dbReference type="UniProtKB" id="P03892"/>
    </source>
</evidence>
<evidence type="ECO:0000255" key="3"/>
<evidence type="ECO:0000305" key="4"/>
<feature type="chain" id="PRO_0000235176" description="NADH-ubiquinone oxidoreductase chain 2">
    <location>
        <begin position="1"/>
        <end position="347"/>
    </location>
</feature>
<feature type="transmembrane region" description="Helical" evidence="3">
    <location>
        <begin position="3"/>
        <end position="23"/>
    </location>
</feature>
<feature type="transmembrane region" description="Helical" evidence="3">
    <location>
        <begin position="25"/>
        <end position="45"/>
    </location>
</feature>
<feature type="transmembrane region" description="Helical" evidence="3">
    <location>
        <begin position="66"/>
        <end position="86"/>
    </location>
</feature>
<feature type="transmembrane region" description="Helical" evidence="3">
    <location>
        <begin position="111"/>
        <end position="131"/>
    </location>
</feature>
<feature type="transmembrane region" description="Helical" evidence="3">
    <location>
        <begin position="149"/>
        <end position="169"/>
    </location>
</feature>
<feature type="transmembrane region" description="Helical" evidence="3">
    <location>
        <begin position="178"/>
        <end position="198"/>
    </location>
</feature>
<feature type="transmembrane region" description="Helical" evidence="3">
    <location>
        <begin position="201"/>
        <end position="221"/>
    </location>
</feature>
<feature type="transmembrane region" description="Helical" evidence="3">
    <location>
        <begin position="237"/>
        <end position="257"/>
    </location>
</feature>
<feature type="transmembrane region" description="Helical" evidence="3">
    <location>
        <begin position="274"/>
        <end position="294"/>
    </location>
</feature>
<feature type="transmembrane region" description="Helical" evidence="3">
    <location>
        <begin position="325"/>
        <end position="345"/>
    </location>
</feature>
<dbReference type="EC" id="7.1.1.2" evidence="1"/>
<dbReference type="EMBL" id="AY750614">
    <property type="protein sequence ID" value="AAW83838.1"/>
    <property type="molecule type" value="Genomic_DNA"/>
</dbReference>
<dbReference type="SMR" id="Q534D9"/>
<dbReference type="Proteomes" id="UP000286640">
    <property type="component" value="Mitochondrion MT"/>
</dbReference>
<dbReference type="GO" id="GO:0005743">
    <property type="term" value="C:mitochondrial inner membrane"/>
    <property type="evidence" value="ECO:0000250"/>
    <property type="project" value="UniProtKB"/>
</dbReference>
<dbReference type="GO" id="GO:0008137">
    <property type="term" value="F:NADH dehydrogenase (ubiquinone) activity"/>
    <property type="evidence" value="ECO:0000250"/>
    <property type="project" value="UniProtKB"/>
</dbReference>
<dbReference type="GO" id="GO:0006120">
    <property type="term" value="P:mitochondrial electron transport, NADH to ubiquinone"/>
    <property type="evidence" value="ECO:0000250"/>
    <property type="project" value="UniProtKB"/>
</dbReference>
<dbReference type="GO" id="GO:0032981">
    <property type="term" value="P:mitochondrial respiratory chain complex I assembly"/>
    <property type="evidence" value="ECO:0000250"/>
    <property type="project" value="UniProtKB"/>
</dbReference>
<dbReference type="InterPro" id="IPR050175">
    <property type="entry name" value="Complex_I_Subunit_2"/>
</dbReference>
<dbReference type="InterPro" id="IPR010933">
    <property type="entry name" value="NADH_DH_su2_C"/>
</dbReference>
<dbReference type="InterPro" id="IPR003917">
    <property type="entry name" value="NADH_UbQ_OxRdtase_chain2"/>
</dbReference>
<dbReference type="InterPro" id="IPR001750">
    <property type="entry name" value="ND/Mrp_TM"/>
</dbReference>
<dbReference type="PANTHER" id="PTHR46552">
    <property type="entry name" value="NADH-UBIQUINONE OXIDOREDUCTASE CHAIN 2"/>
    <property type="match status" value="1"/>
</dbReference>
<dbReference type="PANTHER" id="PTHR46552:SF1">
    <property type="entry name" value="NADH-UBIQUINONE OXIDOREDUCTASE CHAIN 2"/>
    <property type="match status" value="1"/>
</dbReference>
<dbReference type="Pfam" id="PF06444">
    <property type="entry name" value="NADH_dehy_S2_C"/>
    <property type="match status" value="1"/>
</dbReference>
<dbReference type="Pfam" id="PF00361">
    <property type="entry name" value="Proton_antipo_M"/>
    <property type="match status" value="1"/>
</dbReference>
<dbReference type="PRINTS" id="PR01436">
    <property type="entry name" value="NADHDHGNASE2"/>
</dbReference>
<accession>Q534D9</accession>
<comment type="function">
    <text evidence="1">Core subunit of the mitochondrial membrane respiratory chain NADH dehydrogenase (Complex I) which catalyzes electron transfer from NADH through the respiratory chain, using ubiquinone as an electron acceptor. Essential for the catalytic activity and assembly of complex I.</text>
</comment>
<comment type="catalytic activity">
    <reaction evidence="1">
        <text>a ubiquinone + NADH + 5 H(+)(in) = a ubiquinol + NAD(+) + 4 H(+)(out)</text>
        <dbReference type="Rhea" id="RHEA:29091"/>
        <dbReference type="Rhea" id="RHEA-COMP:9565"/>
        <dbReference type="Rhea" id="RHEA-COMP:9566"/>
        <dbReference type="ChEBI" id="CHEBI:15378"/>
        <dbReference type="ChEBI" id="CHEBI:16389"/>
        <dbReference type="ChEBI" id="CHEBI:17976"/>
        <dbReference type="ChEBI" id="CHEBI:57540"/>
        <dbReference type="ChEBI" id="CHEBI:57945"/>
        <dbReference type="EC" id="7.1.1.2"/>
    </reaction>
</comment>
<comment type="subunit">
    <text evidence="1 2">Core subunit of respiratory chain NADH dehydrogenase (Complex I) which is composed of 45 different subunits. Interacts with TMEM242 (By similarity).</text>
</comment>
<comment type="subcellular location">
    <subcellularLocation>
        <location evidence="2">Mitochondrion inner membrane</location>
        <topology evidence="3">Multi-pass membrane protein</topology>
    </subcellularLocation>
</comment>
<comment type="similarity">
    <text evidence="4">Belongs to the complex I subunit 2 family.</text>
</comment>
<proteinExistence type="inferred from homology"/>
<protein>
    <recommendedName>
        <fullName evidence="1">NADH-ubiquinone oxidoreductase chain 2</fullName>
        <ecNumber evidence="1">7.1.1.2</ecNumber>
    </recommendedName>
    <alternativeName>
        <fullName>NADH dehydrogenase subunit 2</fullName>
    </alternativeName>
</protein>
<sequence length="347" mass="38766">MKPPILIAILATVMTGTMIVMLSSHWLLIWIGFEMNMLAIIPILMKKFNPRAMEASTKYFLTQATASMLLMMGVTINLLYSGQWMISKVSNPAASTMMTIALTMKLGLSPFHFWVPEVTQGISLSSGMILLTWQKIAPMSVLYQISPSINTDLMTLVALASVLVGGWGGLNQTQLRKIMAYSSIAHMGWMAAIIIYNPTMMFLNLSLYILMTLSTFMLFMLSASTTTLSLSHTWNKIPLIASTILTLMLSLGGLPPLSGFIPKWMIIQELTKNDMIVVPTLMAITALLNLYFYMRLTYSTALTMFPSANNMKMKWQFEHTKKMTLLPPLIITSTMLLPIMPMMSILD</sequence>
<name>NU2M_VULVU</name>